<evidence type="ECO:0000255" key="1">
    <source>
        <dbReference type="HAMAP-Rule" id="MF_01588"/>
    </source>
</evidence>
<comment type="function">
    <text evidence="1">DNA ligase that catalyzes the formation of phosphodiester linkages between 5'-phosphoryl and 3'-hydroxyl groups in double-stranded DNA using NAD as a coenzyme and as the energy source for the reaction. It is essential for DNA replication and repair of damaged DNA.</text>
</comment>
<comment type="catalytic activity">
    <reaction evidence="1">
        <text>NAD(+) + (deoxyribonucleotide)n-3'-hydroxyl + 5'-phospho-(deoxyribonucleotide)m = (deoxyribonucleotide)n+m + AMP + beta-nicotinamide D-nucleotide.</text>
        <dbReference type="EC" id="6.5.1.2"/>
    </reaction>
</comment>
<comment type="cofactor">
    <cofactor evidence="1">
        <name>Mg(2+)</name>
        <dbReference type="ChEBI" id="CHEBI:18420"/>
    </cofactor>
    <cofactor evidence="1">
        <name>Mn(2+)</name>
        <dbReference type="ChEBI" id="CHEBI:29035"/>
    </cofactor>
</comment>
<comment type="similarity">
    <text evidence="1">Belongs to the NAD-dependent DNA ligase family. LigA subfamily.</text>
</comment>
<name>DNLJ_ACIC1</name>
<gene>
    <name evidence="1" type="primary">ligA</name>
    <name type="ordered locus">Acel_0694</name>
</gene>
<keyword id="KW-0227">DNA damage</keyword>
<keyword id="KW-0234">DNA repair</keyword>
<keyword id="KW-0235">DNA replication</keyword>
<keyword id="KW-0436">Ligase</keyword>
<keyword id="KW-0460">Magnesium</keyword>
<keyword id="KW-0464">Manganese</keyword>
<keyword id="KW-0479">Metal-binding</keyword>
<keyword id="KW-0520">NAD</keyword>
<keyword id="KW-1185">Reference proteome</keyword>
<keyword id="KW-0862">Zinc</keyword>
<dbReference type="EC" id="6.5.1.2" evidence="1"/>
<dbReference type="EMBL" id="CP000481">
    <property type="protein sequence ID" value="ABK52467.1"/>
    <property type="molecule type" value="Genomic_DNA"/>
</dbReference>
<dbReference type="RefSeq" id="WP_011719530.1">
    <property type="nucleotide sequence ID" value="NC_008578.1"/>
</dbReference>
<dbReference type="SMR" id="A0LSQ7"/>
<dbReference type="FunCoup" id="A0LSQ7">
    <property type="interactions" value="48"/>
</dbReference>
<dbReference type="STRING" id="351607.Acel_0694"/>
<dbReference type="KEGG" id="ace:Acel_0694"/>
<dbReference type="eggNOG" id="COG0272">
    <property type="taxonomic scope" value="Bacteria"/>
</dbReference>
<dbReference type="HOGENOM" id="CLU_007764_2_1_11"/>
<dbReference type="InParanoid" id="A0LSQ7"/>
<dbReference type="OrthoDB" id="9759736at2"/>
<dbReference type="Proteomes" id="UP000008221">
    <property type="component" value="Chromosome"/>
</dbReference>
<dbReference type="GO" id="GO:0005829">
    <property type="term" value="C:cytosol"/>
    <property type="evidence" value="ECO:0007669"/>
    <property type="project" value="TreeGrafter"/>
</dbReference>
<dbReference type="GO" id="GO:0003677">
    <property type="term" value="F:DNA binding"/>
    <property type="evidence" value="ECO:0007669"/>
    <property type="project" value="InterPro"/>
</dbReference>
<dbReference type="GO" id="GO:0003911">
    <property type="term" value="F:DNA ligase (NAD+) activity"/>
    <property type="evidence" value="ECO:0007669"/>
    <property type="project" value="UniProtKB-UniRule"/>
</dbReference>
<dbReference type="GO" id="GO:0046872">
    <property type="term" value="F:metal ion binding"/>
    <property type="evidence" value="ECO:0007669"/>
    <property type="project" value="UniProtKB-KW"/>
</dbReference>
<dbReference type="GO" id="GO:0006281">
    <property type="term" value="P:DNA repair"/>
    <property type="evidence" value="ECO:0007669"/>
    <property type="project" value="UniProtKB-KW"/>
</dbReference>
<dbReference type="GO" id="GO:0006260">
    <property type="term" value="P:DNA replication"/>
    <property type="evidence" value="ECO:0007669"/>
    <property type="project" value="UniProtKB-KW"/>
</dbReference>
<dbReference type="CDD" id="cd17748">
    <property type="entry name" value="BRCT_DNA_ligase_like"/>
    <property type="match status" value="1"/>
</dbReference>
<dbReference type="CDD" id="cd00114">
    <property type="entry name" value="LIGANc"/>
    <property type="match status" value="1"/>
</dbReference>
<dbReference type="FunFam" id="1.10.150.20:FF:000006">
    <property type="entry name" value="DNA ligase"/>
    <property type="match status" value="1"/>
</dbReference>
<dbReference type="FunFam" id="1.10.287.610:FF:000002">
    <property type="entry name" value="DNA ligase"/>
    <property type="match status" value="1"/>
</dbReference>
<dbReference type="FunFam" id="2.40.50.140:FF:000012">
    <property type="entry name" value="DNA ligase"/>
    <property type="match status" value="1"/>
</dbReference>
<dbReference type="FunFam" id="3.30.470.30:FF:000001">
    <property type="entry name" value="DNA ligase"/>
    <property type="match status" value="1"/>
</dbReference>
<dbReference type="FunFam" id="3.40.50.10190:FF:000054">
    <property type="entry name" value="DNA ligase"/>
    <property type="match status" value="1"/>
</dbReference>
<dbReference type="Gene3D" id="6.20.10.30">
    <property type="match status" value="1"/>
</dbReference>
<dbReference type="Gene3D" id="1.10.150.20">
    <property type="entry name" value="5' to 3' exonuclease, C-terminal subdomain"/>
    <property type="match status" value="2"/>
</dbReference>
<dbReference type="Gene3D" id="3.40.50.10190">
    <property type="entry name" value="BRCT domain"/>
    <property type="match status" value="1"/>
</dbReference>
<dbReference type="Gene3D" id="3.30.470.30">
    <property type="entry name" value="DNA ligase/mRNA capping enzyme"/>
    <property type="match status" value="1"/>
</dbReference>
<dbReference type="Gene3D" id="1.10.287.610">
    <property type="entry name" value="Helix hairpin bin"/>
    <property type="match status" value="1"/>
</dbReference>
<dbReference type="Gene3D" id="2.40.50.140">
    <property type="entry name" value="Nucleic acid-binding proteins"/>
    <property type="match status" value="1"/>
</dbReference>
<dbReference type="HAMAP" id="MF_01588">
    <property type="entry name" value="DNA_ligase_A"/>
    <property type="match status" value="1"/>
</dbReference>
<dbReference type="InterPro" id="IPR001357">
    <property type="entry name" value="BRCT_dom"/>
</dbReference>
<dbReference type="InterPro" id="IPR036420">
    <property type="entry name" value="BRCT_dom_sf"/>
</dbReference>
<dbReference type="InterPro" id="IPR041663">
    <property type="entry name" value="DisA/LigA_HHH"/>
</dbReference>
<dbReference type="InterPro" id="IPR001679">
    <property type="entry name" value="DNA_ligase"/>
</dbReference>
<dbReference type="InterPro" id="IPR018239">
    <property type="entry name" value="DNA_ligase_AS"/>
</dbReference>
<dbReference type="InterPro" id="IPR033136">
    <property type="entry name" value="DNA_ligase_CS"/>
</dbReference>
<dbReference type="InterPro" id="IPR013839">
    <property type="entry name" value="DNAligase_adenylation"/>
</dbReference>
<dbReference type="InterPro" id="IPR013840">
    <property type="entry name" value="DNAligase_N"/>
</dbReference>
<dbReference type="InterPro" id="IPR003583">
    <property type="entry name" value="Hlx-hairpin-Hlx_DNA-bd_motif"/>
</dbReference>
<dbReference type="InterPro" id="IPR012340">
    <property type="entry name" value="NA-bd_OB-fold"/>
</dbReference>
<dbReference type="InterPro" id="IPR004150">
    <property type="entry name" value="NAD_DNA_ligase_OB"/>
</dbReference>
<dbReference type="InterPro" id="IPR010994">
    <property type="entry name" value="RuvA_2-like"/>
</dbReference>
<dbReference type="InterPro" id="IPR004149">
    <property type="entry name" value="Znf_DNAligase_C4"/>
</dbReference>
<dbReference type="NCBIfam" id="TIGR00575">
    <property type="entry name" value="dnlj"/>
    <property type="match status" value="1"/>
</dbReference>
<dbReference type="NCBIfam" id="NF005932">
    <property type="entry name" value="PRK07956.1"/>
    <property type="match status" value="1"/>
</dbReference>
<dbReference type="PANTHER" id="PTHR23389">
    <property type="entry name" value="CHROMOSOME TRANSMISSION FIDELITY FACTOR 18"/>
    <property type="match status" value="1"/>
</dbReference>
<dbReference type="PANTHER" id="PTHR23389:SF9">
    <property type="entry name" value="DNA LIGASE"/>
    <property type="match status" value="1"/>
</dbReference>
<dbReference type="Pfam" id="PF00533">
    <property type="entry name" value="BRCT"/>
    <property type="match status" value="1"/>
</dbReference>
<dbReference type="Pfam" id="PF01653">
    <property type="entry name" value="DNA_ligase_aden"/>
    <property type="match status" value="1"/>
</dbReference>
<dbReference type="Pfam" id="PF03120">
    <property type="entry name" value="DNA_ligase_OB"/>
    <property type="match status" value="1"/>
</dbReference>
<dbReference type="Pfam" id="PF03119">
    <property type="entry name" value="DNA_ligase_ZBD"/>
    <property type="match status" value="1"/>
</dbReference>
<dbReference type="Pfam" id="PF12826">
    <property type="entry name" value="HHH_2"/>
    <property type="match status" value="1"/>
</dbReference>
<dbReference type="Pfam" id="PF22745">
    <property type="entry name" value="Nlig-Ia"/>
    <property type="match status" value="1"/>
</dbReference>
<dbReference type="PIRSF" id="PIRSF001604">
    <property type="entry name" value="LigA"/>
    <property type="match status" value="1"/>
</dbReference>
<dbReference type="SMART" id="SM00292">
    <property type="entry name" value="BRCT"/>
    <property type="match status" value="1"/>
</dbReference>
<dbReference type="SMART" id="SM00278">
    <property type="entry name" value="HhH1"/>
    <property type="match status" value="2"/>
</dbReference>
<dbReference type="SMART" id="SM00532">
    <property type="entry name" value="LIGANc"/>
    <property type="match status" value="1"/>
</dbReference>
<dbReference type="SUPFAM" id="SSF52113">
    <property type="entry name" value="BRCT domain"/>
    <property type="match status" value="1"/>
</dbReference>
<dbReference type="SUPFAM" id="SSF56091">
    <property type="entry name" value="DNA ligase/mRNA capping enzyme, catalytic domain"/>
    <property type="match status" value="1"/>
</dbReference>
<dbReference type="SUPFAM" id="SSF50249">
    <property type="entry name" value="Nucleic acid-binding proteins"/>
    <property type="match status" value="1"/>
</dbReference>
<dbReference type="SUPFAM" id="SSF47781">
    <property type="entry name" value="RuvA domain 2-like"/>
    <property type="match status" value="1"/>
</dbReference>
<dbReference type="PROSITE" id="PS50172">
    <property type="entry name" value="BRCT"/>
    <property type="match status" value="1"/>
</dbReference>
<dbReference type="PROSITE" id="PS01055">
    <property type="entry name" value="DNA_LIGASE_N1"/>
    <property type="match status" value="1"/>
</dbReference>
<dbReference type="PROSITE" id="PS01056">
    <property type="entry name" value="DNA_LIGASE_N2"/>
    <property type="match status" value="1"/>
</dbReference>
<accession>A0LSQ7</accession>
<feature type="chain" id="PRO_0000313098" description="DNA ligase">
    <location>
        <begin position="1"/>
        <end position="695"/>
    </location>
</feature>
<feature type="domain" description="BRCT" evidence="1">
    <location>
        <begin position="605"/>
        <end position="694"/>
    </location>
</feature>
<feature type="active site" description="N6-AMP-lysine intermediate" evidence="1">
    <location>
        <position position="125"/>
    </location>
</feature>
<feature type="binding site" evidence="1">
    <location>
        <begin position="44"/>
        <end position="48"/>
    </location>
    <ligand>
        <name>NAD(+)</name>
        <dbReference type="ChEBI" id="CHEBI:57540"/>
    </ligand>
</feature>
<feature type="binding site" evidence="1">
    <location>
        <begin position="93"/>
        <end position="94"/>
    </location>
    <ligand>
        <name>NAD(+)</name>
        <dbReference type="ChEBI" id="CHEBI:57540"/>
    </ligand>
</feature>
<feature type="binding site" evidence="1">
    <location>
        <position position="123"/>
    </location>
    <ligand>
        <name>NAD(+)</name>
        <dbReference type="ChEBI" id="CHEBI:57540"/>
    </ligand>
</feature>
<feature type="binding site" evidence="1">
    <location>
        <position position="146"/>
    </location>
    <ligand>
        <name>NAD(+)</name>
        <dbReference type="ChEBI" id="CHEBI:57540"/>
    </ligand>
</feature>
<feature type="binding site" evidence="1">
    <location>
        <position position="184"/>
    </location>
    <ligand>
        <name>NAD(+)</name>
        <dbReference type="ChEBI" id="CHEBI:57540"/>
    </ligand>
</feature>
<feature type="binding site" evidence="1">
    <location>
        <position position="300"/>
    </location>
    <ligand>
        <name>NAD(+)</name>
        <dbReference type="ChEBI" id="CHEBI:57540"/>
    </ligand>
</feature>
<feature type="binding site" evidence="1">
    <location>
        <position position="324"/>
    </location>
    <ligand>
        <name>NAD(+)</name>
        <dbReference type="ChEBI" id="CHEBI:57540"/>
    </ligand>
</feature>
<feature type="binding site" evidence="1">
    <location>
        <position position="418"/>
    </location>
    <ligand>
        <name>Zn(2+)</name>
        <dbReference type="ChEBI" id="CHEBI:29105"/>
    </ligand>
</feature>
<feature type="binding site" evidence="1">
    <location>
        <position position="421"/>
    </location>
    <ligand>
        <name>Zn(2+)</name>
        <dbReference type="ChEBI" id="CHEBI:29105"/>
    </ligand>
</feature>
<feature type="binding site" evidence="1">
    <location>
        <position position="436"/>
    </location>
    <ligand>
        <name>Zn(2+)</name>
        <dbReference type="ChEBI" id="CHEBI:29105"/>
    </ligand>
</feature>
<feature type="binding site" evidence="1">
    <location>
        <position position="442"/>
    </location>
    <ligand>
        <name>Zn(2+)</name>
        <dbReference type="ChEBI" id="CHEBI:29105"/>
    </ligand>
</feature>
<proteinExistence type="inferred from homology"/>
<protein>
    <recommendedName>
        <fullName evidence="1">DNA ligase</fullName>
        <ecNumber evidence="1">6.5.1.2</ecNumber>
    </recommendedName>
    <alternativeName>
        <fullName evidence="1">Polydeoxyribonucleotide synthase [NAD(+)]</fullName>
    </alternativeName>
</protein>
<organism>
    <name type="scientific">Acidothermus cellulolyticus (strain ATCC 43068 / DSM 8971 / 11B)</name>
    <dbReference type="NCBI Taxonomy" id="351607"/>
    <lineage>
        <taxon>Bacteria</taxon>
        <taxon>Bacillati</taxon>
        <taxon>Actinomycetota</taxon>
        <taxon>Actinomycetes</taxon>
        <taxon>Acidothermales</taxon>
        <taxon>Acidothermaceae</taxon>
        <taxon>Acidothermus</taxon>
    </lineage>
</organism>
<sequence length="695" mass="75300">MSPARNTGIPASAADAARRHAELVKEIEEHAYRYYVLDAPTISDAEYDALMRELEEIENAYPELRTPDSPTQKVQGAPAAHFAPVEHLERMLSLDNVFTEGELRAWIARVEKEVGTDAAYLCEPKVDGLAVDLVYEDGVLVRGATRGDGRVGEDVTANIKAIRNVPHRLHRDGNLPALLEVRGEVYFPVADFAELNAGLVAAGKAPFANPRNAAAGSLRQKDPRVTASRPLRLVVHGIGAHQGLAAARQSEAYVALAAWGLPVSERAKVATTTKEILDYIAYYAEHRHDLEHEIDGVVVKVDQFALQRRLGATAKAPRWAVAYKYPPEEVTTKLLDIQVNVGRTGRVTPFAVMEPVRVAGSTVTNATLHNADEIKRKGVLIGDTVVVRKAGDVIPEVVGPVVALRDGSEREFVFPSHCPACGTPLVRENGGVDIRCPNARSCPAQLRERLFHIASRGALDIESLGYEAANALLESKLLADEGDLFLLTPEKLRTVPFFTKKDGELSANAVKLLENLESAKTRPLWRVLVALSIRHVGPTAARALAREFGSIDAIRNASVDELAAVEGVGRVIAESIRDWFAVDWHQEIVAKWSAAGVRMAEEQRSAAKPLAGITVVVTGTLSRWSRDSAIEAIQDAGGRAAGSVSKKTDFVVVGENPGSKYDKARQLGIPILDEEGFATLLTKGPDAARSMAQRP</sequence>
<reference key="1">
    <citation type="journal article" date="2009" name="Genome Res.">
        <title>Complete genome of the cellulolytic thermophile Acidothermus cellulolyticus 11B provides insights into its ecophysiological and evolutionary adaptations.</title>
        <authorList>
            <person name="Barabote R.D."/>
            <person name="Xie G."/>
            <person name="Leu D.H."/>
            <person name="Normand P."/>
            <person name="Necsulea A."/>
            <person name="Daubin V."/>
            <person name="Medigue C."/>
            <person name="Adney W.S."/>
            <person name="Xu X.C."/>
            <person name="Lapidus A."/>
            <person name="Parales R.E."/>
            <person name="Detter C."/>
            <person name="Pujic P."/>
            <person name="Bruce D."/>
            <person name="Lavire C."/>
            <person name="Challacombe J.F."/>
            <person name="Brettin T.S."/>
            <person name="Berry A.M."/>
        </authorList>
    </citation>
    <scope>NUCLEOTIDE SEQUENCE [LARGE SCALE GENOMIC DNA]</scope>
    <source>
        <strain>ATCC 43068 / DSM 8971 / 11B</strain>
    </source>
</reference>